<dbReference type="EC" id="1.6.5.-" evidence="1"/>
<dbReference type="EC" id="1.7.1.17" evidence="1"/>
<dbReference type="EMBL" id="CP000749">
    <property type="protein sequence ID" value="ABR69702.1"/>
    <property type="molecule type" value="Genomic_DNA"/>
</dbReference>
<dbReference type="SMR" id="A6VTC3"/>
<dbReference type="STRING" id="400668.Mmwyl1_0768"/>
<dbReference type="KEGG" id="mmw:Mmwyl1_0768"/>
<dbReference type="eggNOG" id="COG1182">
    <property type="taxonomic scope" value="Bacteria"/>
</dbReference>
<dbReference type="HOGENOM" id="CLU_088964_0_0_6"/>
<dbReference type="OrthoDB" id="9787136at2"/>
<dbReference type="GO" id="GO:0009055">
    <property type="term" value="F:electron transfer activity"/>
    <property type="evidence" value="ECO:0007669"/>
    <property type="project" value="UniProtKB-UniRule"/>
</dbReference>
<dbReference type="GO" id="GO:0010181">
    <property type="term" value="F:FMN binding"/>
    <property type="evidence" value="ECO:0007669"/>
    <property type="project" value="UniProtKB-UniRule"/>
</dbReference>
<dbReference type="GO" id="GO:0016652">
    <property type="term" value="F:oxidoreductase activity, acting on NAD(P)H as acceptor"/>
    <property type="evidence" value="ECO:0007669"/>
    <property type="project" value="UniProtKB-UniRule"/>
</dbReference>
<dbReference type="GO" id="GO:0016655">
    <property type="term" value="F:oxidoreductase activity, acting on NAD(P)H, quinone or similar compound as acceptor"/>
    <property type="evidence" value="ECO:0007669"/>
    <property type="project" value="InterPro"/>
</dbReference>
<dbReference type="Gene3D" id="3.40.50.360">
    <property type="match status" value="1"/>
</dbReference>
<dbReference type="HAMAP" id="MF_01216">
    <property type="entry name" value="Azoreductase_type1"/>
    <property type="match status" value="1"/>
</dbReference>
<dbReference type="InterPro" id="IPR003680">
    <property type="entry name" value="Flavodoxin_fold"/>
</dbReference>
<dbReference type="InterPro" id="IPR029039">
    <property type="entry name" value="Flavoprotein-like_sf"/>
</dbReference>
<dbReference type="InterPro" id="IPR050104">
    <property type="entry name" value="FMN-dep_NADH:Q_OxRdtase_AzoR1"/>
</dbReference>
<dbReference type="InterPro" id="IPR023048">
    <property type="entry name" value="NADH:quinone_OxRdtase_FMN_depd"/>
</dbReference>
<dbReference type="PANTHER" id="PTHR43741">
    <property type="entry name" value="FMN-DEPENDENT NADH-AZOREDUCTASE 1"/>
    <property type="match status" value="1"/>
</dbReference>
<dbReference type="PANTHER" id="PTHR43741:SF2">
    <property type="entry name" value="FMN-DEPENDENT NADH:QUINONE OXIDOREDUCTASE"/>
    <property type="match status" value="1"/>
</dbReference>
<dbReference type="Pfam" id="PF02525">
    <property type="entry name" value="Flavodoxin_2"/>
    <property type="match status" value="1"/>
</dbReference>
<dbReference type="SUPFAM" id="SSF52218">
    <property type="entry name" value="Flavoproteins"/>
    <property type="match status" value="1"/>
</dbReference>
<gene>
    <name evidence="1" type="primary">azoR</name>
    <name type="ordered locus">Mmwyl1_0768</name>
</gene>
<proteinExistence type="inferred from homology"/>
<accession>A6VTC3</accession>
<evidence type="ECO:0000255" key="1">
    <source>
        <dbReference type="HAMAP-Rule" id="MF_01216"/>
    </source>
</evidence>
<name>AZOR_MARMS</name>
<feature type="chain" id="PRO_1000085584" description="FMN-dependent NADH:quinone oxidoreductase">
    <location>
        <begin position="1"/>
        <end position="197"/>
    </location>
</feature>
<feature type="binding site" evidence="1">
    <location>
        <position position="10"/>
    </location>
    <ligand>
        <name>FMN</name>
        <dbReference type="ChEBI" id="CHEBI:58210"/>
    </ligand>
</feature>
<feature type="binding site" evidence="1">
    <location>
        <begin position="16"/>
        <end position="18"/>
    </location>
    <ligand>
        <name>FMN</name>
        <dbReference type="ChEBI" id="CHEBI:58210"/>
    </ligand>
</feature>
<feature type="binding site" evidence="1">
    <location>
        <begin position="96"/>
        <end position="99"/>
    </location>
    <ligand>
        <name>FMN</name>
        <dbReference type="ChEBI" id="CHEBI:58210"/>
    </ligand>
</feature>
<organism>
    <name type="scientific">Marinomonas sp. (strain MWYL1)</name>
    <dbReference type="NCBI Taxonomy" id="400668"/>
    <lineage>
        <taxon>Bacteria</taxon>
        <taxon>Pseudomonadati</taxon>
        <taxon>Pseudomonadota</taxon>
        <taxon>Gammaproteobacteria</taxon>
        <taxon>Oceanospirillales</taxon>
        <taxon>Oceanospirillaceae</taxon>
        <taxon>Marinomonas</taxon>
    </lineage>
</organism>
<keyword id="KW-0285">Flavoprotein</keyword>
<keyword id="KW-0288">FMN</keyword>
<keyword id="KW-0520">NAD</keyword>
<keyword id="KW-0560">Oxidoreductase</keyword>
<protein>
    <recommendedName>
        <fullName evidence="1">FMN-dependent NADH:quinone oxidoreductase</fullName>
        <ecNumber evidence="1">1.6.5.-</ecNumber>
    </recommendedName>
    <alternativeName>
        <fullName evidence="1">Azo-dye reductase</fullName>
    </alternativeName>
    <alternativeName>
        <fullName evidence="1">FMN-dependent NADH-azo compound oxidoreductase</fullName>
    </alternativeName>
    <alternativeName>
        <fullName evidence="1">FMN-dependent NADH-azoreductase</fullName>
        <ecNumber evidence="1">1.7.1.17</ecNumber>
    </alternativeName>
</protein>
<comment type="function">
    <text evidence="1">Quinone reductase that provides resistance to thiol-specific stress caused by electrophilic quinones.</text>
</comment>
<comment type="function">
    <text evidence="1">Also exhibits azoreductase activity. Catalyzes the reductive cleavage of the azo bond in aromatic azo compounds to the corresponding amines.</text>
</comment>
<comment type="catalytic activity">
    <reaction evidence="1">
        <text>2 a quinone + NADH + H(+) = 2 a 1,4-benzosemiquinone + NAD(+)</text>
        <dbReference type="Rhea" id="RHEA:65952"/>
        <dbReference type="ChEBI" id="CHEBI:15378"/>
        <dbReference type="ChEBI" id="CHEBI:57540"/>
        <dbReference type="ChEBI" id="CHEBI:57945"/>
        <dbReference type="ChEBI" id="CHEBI:132124"/>
        <dbReference type="ChEBI" id="CHEBI:134225"/>
    </reaction>
</comment>
<comment type="catalytic activity">
    <reaction evidence="1">
        <text>N,N-dimethyl-1,4-phenylenediamine + anthranilate + 2 NAD(+) = 2-(4-dimethylaminophenyl)diazenylbenzoate + 2 NADH + 2 H(+)</text>
        <dbReference type="Rhea" id="RHEA:55872"/>
        <dbReference type="ChEBI" id="CHEBI:15378"/>
        <dbReference type="ChEBI" id="CHEBI:15783"/>
        <dbReference type="ChEBI" id="CHEBI:16567"/>
        <dbReference type="ChEBI" id="CHEBI:57540"/>
        <dbReference type="ChEBI" id="CHEBI:57945"/>
        <dbReference type="ChEBI" id="CHEBI:71579"/>
        <dbReference type="EC" id="1.7.1.17"/>
    </reaction>
</comment>
<comment type="cofactor">
    <cofactor evidence="1">
        <name>FMN</name>
        <dbReference type="ChEBI" id="CHEBI:58210"/>
    </cofactor>
    <text evidence="1">Binds 1 FMN per subunit.</text>
</comment>
<comment type="subunit">
    <text evidence="1">Homodimer.</text>
</comment>
<comment type="similarity">
    <text evidence="1">Belongs to the azoreductase type 1 family.</text>
</comment>
<sequence length="197" mass="21012">MATLLRIDSSASGENSKSRQLANEFVEKWLAKNPEGKVVARDVTANPLPHFTGETLGALFTPEENRTAEQQAIVAIGDELIAELEAADLVIVSAPMYNFGIPSTLKSYFDHVARAGRTFKYTETGPVGLVNKDAYIFAASGSFLAGAPVDHQVPHIQTFLGFIGLNVKDTFIAGGQAMGEPGEDAFNQAKSQIAVAV</sequence>
<reference key="1">
    <citation type="submission" date="2007-06" db="EMBL/GenBank/DDBJ databases">
        <title>Complete sequence of Marinomonas sp. MWYL1.</title>
        <authorList>
            <consortium name="US DOE Joint Genome Institute"/>
            <person name="Copeland A."/>
            <person name="Lucas S."/>
            <person name="Lapidus A."/>
            <person name="Barry K."/>
            <person name="Glavina del Rio T."/>
            <person name="Dalin E."/>
            <person name="Tice H."/>
            <person name="Pitluck S."/>
            <person name="Kiss H."/>
            <person name="Brettin T."/>
            <person name="Bruce D."/>
            <person name="Detter J.C."/>
            <person name="Han C."/>
            <person name="Schmutz J."/>
            <person name="Larimer F."/>
            <person name="Land M."/>
            <person name="Hauser L."/>
            <person name="Kyrpides N."/>
            <person name="Kim E."/>
            <person name="Johnston A.W.B."/>
            <person name="Todd J.D."/>
            <person name="Rogers R."/>
            <person name="Wexler M."/>
            <person name="Bond P.L."/>
            <person name="Li Y."/>
            <person name="Richardson P."/>
        </authorList>
    </citation>
    <scope>NUCLEOTIDE SEQUENCE [LARGE SCALE GENOMIC DNA]</scope>
    <source>
        <strain>MWYL1</strain>
    </source>
</reference>